<reference key="1">
    <citation type="journal article" date="2008" name="BMC Microbiol.">
        <title>Complete genome sequence of Treponema pallidum ssp. pallidum strain SS14 determined with oligonucleotide arrays.</title>
        <authorList>
            <person name="Matejkova P."/>
            <person name="Strouhal M."/>
            <person name="Smajs D."/>
            <person name="Norris S.J."/>
            <person name="Palzkill T."/>
            <person name="Petrosino J.F."/>
            <person name="Sodergren E."/>
            <person name="Norton J.E."/>
            <person name="Singh J."/>
            <person name="Richmond T.A."/>
            <person name="Molla M.N."/>
            <person name="Albert T.J."/>
            <person name="Weinstock G.M."/>
        </authorList>
    </citation>
    <scope>NUCLEOTIDE SEQUENCE [LARGE SCALE GENOMIC DNA]</scope>
    <source>
        <strain>SS14</strain>
    </source>
</reference>
<keyword id="KW-0030">Aminoacyl-tRNA synthetase</keyword>
<keyword id="KW-0067">ATP-binding</keyword>
<keyword id="KW-0963">Cytoplasm</keyword>
<keyword id="KW-0436">Ligase</keyword>
<keyword id="KW-0547">Nucleotide-binding</keyword>
<keyword id="KW-0648">Protein biosynthesis</keyword>
<accession>B2S3J9</accession>
<protein>
    <recommendedName>
        <fullName evidence="1">Asparagine--tRNA ligase</fullName>
        <ecNumber evidence="1">6.1.1.22</ecNumber>
    </recommendedName>
    <alternativeName>
        <fullName evidence="1">Asparaginyl-tRNA synthetase</fullName>
        <shortName evidence="1">AsnRS</shortName>
    </alternativeName>
</protein>
<gene>
    <name evidence="1" type="primary">asnS</name>
    <name type="ordered locus">TPASS_0609</name>
</gene>
<name>SYN_TREPS</name>
<proteinExistence type="inferred from homology"/>
<dbReference type="EC" id="6.1.1.22" evidence="1"/>
<dbReference type="EMBL" id="CP000805">
    <property type="protein sequence ID" value="ACD71028.1"/>
    <property type="molecule type" value="Genomic_DNA"/>
</dbReference>
<dbReference type="SMR" id="B2S3J9"/>
<dbReference type="KEGG" id="tpp:TPASS_0609"/>
<dbReference type="PATRIC" id="fig|455434.6.peg.603"/>
<dbReference type="Proteomes" id="UP000001202">
    <property type="component" value="Chromosome"/>
</dbReference>
<dbReference type="GO" id="GO:0005737">
    <property type="term" value="C:cytoplasm"/>
    <property type="evidence" value="ECO:0007669"/>
    <property type="project" value="UniProtKB-SubCell"/>
</dbReference>
<dbReference type="GO" id="GO:0004816">
    <property type="term" value="F:asparagine-tRNA ligase activity"/>
    <property type="evidence" value="ECO:0007669"/>
    <property type="project" value="UniProtKB-UniRule"/>
</dbReference>
<dbReference type="GO" id="GO:0005524">
    <property type="term" value="F:ATP binding"/>
    <property type="evidence" value="ECO:0007669"/>
    <property type="project" value="UniProtKB-UniRule"/>
</dbReference>
<dbReference type="GO" id="GO:0003676">
    <property type="term" value="F:nucleic acid binding"/>
    <property type="evidence" value="ECO:0007669"/>
    <property type="project" value="InterPro"/>
</dbReference>
<dbReference type="GO" id="GO:0006421">
    <property type="term" value="P:asparaginyl-tRNA aminoacylation"/>
    <property type="evidence" value="ECO:0007669"/>
    <property type="project" value="UniProtKB-UniRule"/>
</dbReference>
<dbReference type="CDD" id="cd00776">
    <property type="entry name" value="AsxRS_core"/>
    <property type="match status" value="1"/>
</dbReference>
<dbReference type="CDD" id="cd04318">
    <property type="entry name" value="EcAsnRS_like_N"/>
    <property type="match status" value="1"/>
</dbReference>
<dbReference type="Gene3D" id="3.30.930.10">
    <property type="entry name" value="Bira Bifunctional Protein, Domain 2"/>
    <property type="match status" value="1"/>
</dbReference>
<dbReference type="Gene3D" id="2.40.50.140">
    <property type="entry name" value="Nucleic acid-binding proteins"/>
    <property type="match status" value="1"/>
</dbReference>
<dbReference type="HAMAP" id="MF_00534">
    <property type="entry name" value="Asn_tRNA_synth"/>
    <property type="match status" value="1"/>
</dbReference>
<dbReference type="InterPro" id="IPR004364">
    <property type="entry name" value="Aa-tRNA-synt_II"/>
</dbReference>
<dbReference type="InterPro" id="IPR006195">
    <property type="entry name" value="aa-tRNA-synth_II"/>
</dbReference>
<dbReference type="InterPro" id="IPR045864">
    <property type="entry name" value="aa-tRNA-synth_II/BPL/LPL"/>
</dbReference>
<dbReference type="InterPro" id="IPR004522">
    <property type="entry name" value="Asn-tRNA-ligase"/>
</dbReference>
<dbReference type="InterPro" id="IPR002312">
    <property type="entry name" value="Asp/Asn-tRNA-synth_IIb"/>
</dbReference>
<dbReference type="InterPro" id="IPR012340">
    <property type="entry name" value="NA-bd_OB-fold"/>
</dbReference>
<dbReference type="InterPro" id="IPR004365">
    <property type="entry name" value="NA-bd_OB_tRNA"/>
</dbReference>
<dbReference type="NCBIfam" id="NF003037">
    <property type="entry name" value="PRK03932.1"/>
    <property type="match status" value="1"/>
</dbReference>
<dbReference type="PANTHER" id="PTHR22594:SF34">
    <property type="entry name" value="ASPARAGINE--TRNA LIGASE, MITOCHONDRIAL-RELATED"/>
    <property type="match status" value="1"/>
</dbReference>
<dbReference type="PANTHER" id="PTHR22594">
    <property type="entry name" value="ASPARTYL/LYSYL-TRNA SYNTHETASE"/>
    <property type="match status" value="1"/>
</dbReference>
<dbReference type="Pfam" id="PF00152">
    <property type="entry name" value="tRNA-synt_2"/>
    <property type="match status" value="1"/>
</dbReference>
<dbReference type="Pfam" id="PF01336">
    <property type="entry name" value="tRNA_anti-codon"/>
    <property type="match status" value="1"/>
</dbReference>
<dbReference type="PRINTS" id="PR01042">
    <property type="entry name" value="TRNASYNTHASP"/>
</dbReference>
<dbReference type="SUPFAM" id="SSF55681">
    <property type="entry name" value="Class II aaRS and biotin synthetases"/>
    <property type="match status" value="1"/>
</dbReference>
<dbReference type="SUPFAM" id="SSF50249">
    <property type="entry name" value="Nucleic acid-binding proteins"/>
    <property type="match status" value="1"/>
</dbReference>
<dbReference type="PROSITE" id="PS50862">
    <property type="entry name" value="AA_TRNA_LIGASE_II"/>
    <property type="match status" value="1"/>
</dbReference>
<evidence type="ECO:0000255" key="1">
    <source>
        <dbReference type="HAMAP-Rule" id="MF_00534"/>
    </source>
</evidence>
<evidence type="ECO:0000256" key="2">
    <source>
        <dbReference type="SAM" id="MobiDB-lite"/>
    </source>
</evidence>
<organism>
    <name type="scientific">Treponema pallidum subsp. pallidum (strain SS14)</name>
    <dbReference type="NCBI Taxonomy" id="455434"/>
    <lineage>
        <taxon>Bacteria</taxon>
        <taxon>Pseudomonadati</taxon>
        <taxon>Spirochaetota</taxon>
        <taxon>Spirochaetia</taxon>
        <taxon>Spirochaetales</taxon>
        <taxon>Treponemataceae</taxon>
        <taxon>Treponema</taxon>
    </lineage>
</organism>
<sequence>MRAMHPLLKEILTHPPSGQHECVHGWVRSKRETKRAVFISLSDGSCPDTLQVTVPLPECSASLSSGAQAEQIPNVRDAVLQGETLAQTLKRVTTGACIRAEGALVPSPGAGQALELRACNLTVLGEAPAETYPLQKKSHSFEFLRAHAHLRARTSTFAACARVRSALAGAVHRFFSERHFQYVHTPIITASDCEGAGELFRVTTFDPVRIAREAHAAGAAGNPYALTYADDFFGKAARLTVSGQLQGEAYALALTRIYTFGPTFRAENSNTSRHLSEFWMVEPEIAFARITDCMDVAEEFLAYLLRAALKDCAQDIAFLDERAAQHARSARGDTPLAARSTARTPPVRTPGQLTRMLEDVARAPATRLTYTEAIKLLENSGRSFEFPVRWGCDLQSEHECFLTEEVFHGPVIVYDYPKEIKAFYMKLNADGTTVRSMDLLVPGLGEIMGGSEREEQFEVLCARIRASGFDPHDYRWYTDLRRFGTAPHAGFGLGFERLLQYVTGLGNIRDVIPFPRTPRTADF</sequence>
<comment type="catalytic activity">
    <reaction evidence="1">
        <text>tRNA(Asn) + L-asparagine + ATP = L-asparaginyl-tRNA(Asn) + AMP + diphosphate + H(+)</text>
        <dbReference type="Rhea" id="RHEA:11180"/>
        <dbReference type="Rhea" id="RHEA-COMP:9659"/>
        <dbReference type="Rhea" id="RHEA-COMP:9674"/>
        <dbReference type="ChEBI" id="CHEBI:15378"/>
        <dbReference type="ChEBI" id="CHEBI:30616"/>
        <dbReference type="ChEBI" id="CHEBI:33019"/>
        <dbReference type="ChEBI" id="CHEBI:58048"/>
        <dbReference type="ChEBI" id="CHEBI:78442"/>
        <dbReference type="ChEBI" id="CHEBI:78515"/>
        <dbReference type="ChEBI" id="CHEBI:456215"/>
        <dbReference type="EC" id="6.1.1.22"/>
    </reaction>
</comment>
<comment type="subunit">
    <text evidence="1">Homodimer.</text>
</comment>
<comment type="subcellular location">
    <subcellularLocation>
        <location evidence="1">Cytoplasm</location>
    </subcellularLocation>
</comment>
<comment type="similarity">
    <text evidence="1">Belongs to the class-II aminoacyl-tRNA synthetase family.</text>
</comment>
<feature type="chain" id="PRO_1000128218" description="Asparagine--tRNA ligase">
    <location>
        <begin position="1"/>
        <end position="523"/>
    </location>
</feature>
<feature type="region of interest" description="Disordered" evidence="2">
    <location>
        <begin position="329"/>
        <end position="350"/>
    </location>
</feature>